<name>SK2_RHOPR</name>
<keyword id="KW-0027">Amidation</keyword>
<keyword id="KW-0903">Direct protein sequencing</keyword>
<keyword id="KW-0527">Neuropeptide</keyword>
<keyword id="KW-0558">Oxidation</keyword>
<keyword id="KW-1185">Reference proteome</keyword>
<keyword id="KW-0964">Secreted</keyword>
<feature type="peptide" id="PRO_0000365779" description="Sulfakinin-2" evidence="3">
    <location>
        <begin position="1"/>
        <end position="14"/>
    </location>
</feature>
<feature type="modified residue" description="Methionine sulfoxide" evidence="3">
    <location>
        <position position="12"/>
    </location>
</feature>
<feature type="modified residue" description="Phenylalanine amide" evidence="3">
    <location>
        <position position="14"/>
    </location>
</feature>
<proteinExistence type="evidence at protein level"/>
<dbReference type="STRING" id="13249.P85811"/>
<dbReference type="InParanoid" id="P85811"/>
<dbReference type="Proteomes" id="UP000015103">
    <property type="component" value="Unassembled WGS sequence"/>
</dbReference>
<dbReference type="GO" id="GO:0005576">
    <property type="term" value="C:extracellular region"/>
    <property type="evidence" value="ECO:0007669"/>
    <property type="project" value="UniProtKB-SubCell"/>
</dbReference>
<dbReference type="GO" id="GO:0007218">
    <property type="term" value="P:neuropeptide signaling pathway"/>
    <property type="evidence" value="ECO:0007669"/>
    <property type="project" value="UniProtKB-KW"/>
</dbReference>
<organism>
    <name type="scientific">Rhodnius prolixus</name>
    <name type="common">Triatomid bug</name>
    <dbReference type="NCBI Taxonomy" id="13249"/>
    <lineage>
        <taxon>Eukaryota</taxon>
        <taxon>Metazoa</taxon>
        <taxon>Ecdysozoa</taxon>
        <taxon>Arthropoda</taxon>
        <taxon>Hexapoda</taxon>
        <taxon>Insecta</taxon>
        <taxon>Pterygota</taxon>
        <taxon>Neoptera</taxon>
        <taxon>Paraneoptera</taxon>
        <taxon>Hemiptera</taxon>
        <taxon>Heteroptera</taxon>
        <taxon>Panheteroptera</taxon>
        <taxon>Cimicomorpha</taxon>
        <taxon>Reduviidae</taxon>
        <taxon>Triatominae</taxon>
        <taxon>Rhodnius</taxon>
    </lineage>
</organism>
<accession>P85811</accession>
<evidence type="ECO:0000250" key="1">
    <source>
        <dbReference type="UniProtKB" id="P41493"/>
    </source>
</evidence>
<evidence type="ECO:0000255" key="2"/>
<evidence type="ECO:0000269" key="3">
    <source>
    </source>
</evidence>
<evidence type="ECO:0000303" key="4">
    <source>
    </source>
</evidence>
<evidence type="ECO:0000305" key="5"/>
<protein>
    <recommendedName>
        <fullName evidence="4">Sulfakinin-2</fullName>
        <shortName evidence="4">Rhopr-SK-2</shortName>
    </recommendedName>
</protein>
<sequence length="14" mass="1787">NSDEQFDDYGYMRF</sequence>
<reference evidence="5" key="1">
    <citation type="journal article" date="2009" name="Proteomics">
        <title>The neuropeptidome of Rhodnius prolixus brain.</title>
        <authorList>
            <person name="Ons S."/>
            <person name="Richter F."/>
            <person name="Urlaub H."/>
            <person name="Pomar R.R."/>
        </authorList>
    </citation>
    <scope>PROTEIN SEQUENCE</scope>
    <scope>MASS SPECTROMETRY</scope>
    <scope>OXIDATION AT MET-12</scope>
    <scope>AMIDATION AT PHE-14</scope>
    <source>
        <tissue evidence="3">Brain</tissue>
    </source>
</reference>
<comment type="function">
    <text evidence="1">Myotropic peptide.</text>
</comment>
<comment type="subcellular location">
    <subcellularLocation>
        <location evidence="5">Secreted</location>
    </subcellularLocation>
</comment>
<comment type="PTM">
    <text evidence="3">Occurs in two forms, Rhopr-SK-2 contains unmodified Met-12 and Ox-Rhopr-SK-2 has oxidation at Met-12.</text>
</comment>
<comment type="PTM">
    <text evidence="3">Does not contain sulfotyrosine.</text>
</comment>
<comment type="mass spectrometry" mass="1785.75" method="MALDI" evidence="3"/>
<comment type="mass spectrometry" mass="1801.76" method="MALDI" evidence="3">
    <text>With oxidation at Met-12.</text>
</comment>
<comment type="similarity">
    <text evidence="2">Belongs to the gastrin/cholecystokinin family.</text>
</comment>